<name>IF2B_SULTO</name>
<protein>
    <recommendedName>
        <fullName evidence="1">Translation initiation factor 2 subunit beta</fullName>
    </recommendedName>
    <alternativeName>
        <fullName evidence="1">aIF2-beta</fullName>
    </alternativeName>
    <alternativeName>
        <fullName evidence="1">eIF-2-beta</fullName>
    </alternativeName>
</protein>
<feature type="chain" id="PRO_0000137435" description="Translation initiation factor 2 subunit beta">
    <location>
        <begin position="1"/>
        <end position="139"/>
    </location>
</feature>
<sequence length="139" mass="15736">MSTEEEYIKLLDRLYSKLPERVQKVSGQSLPNLIILSIGNNTIIKNFSEYCDRIRREDKLCAKFILKELAAPGNVDENGQLVIQGKFSSASINKIMERFIKTYVQCSTCKSLDTVLIKEKKAWYISCLACGAKTPVKPL</sequence>
<proteinExistence type="inferred from homology"/>
<comment type="function">
    <text evidence="1">eIF-2 functions in the early steps of protein synthesis by forming a ternary complex with GTP and initiator tRNA.</text>
</comment>
<comment type="subunit">
    <text evidence="1">Heterotrimer composed of an alpha, a beta and a gamma chain.</text>
</comment>
<comment type="similarity">
    <text evidence="1">Belongs to the eIF-2-beta/eIF-5 family.</text>
</comment>
<keyword id="KW-0396">Initiation factor</keyword>
<keyword id="KW-0648">Protein biosynthesis</keyword>
<keyword id="KW-1185">Reference proteome</keyword>
<organism>
    <name type="scientific">Sulfurisphaera tokodaii (strain DSM 16993 / JCM 10545 / NBRC 100140 / 7)</name>
    <name type="common">Sulfolobus tokodaii</name>
    <dbReference type="NCBI Taxonomy" id="273063"/>
    <lineage>
        <taxon>Archaea</taxon>
        <taxon>Thermoproteota</taxon>
        <taxon>Thermoprotei</taxon>
        <taxon>Sulfolobales</taxon>
        <taxon>Sulfolobaceae</taxon>
        <taxon>Sulfurisphaera</taxon>
    </lineage>
</organism>
<gene>
    <name evidence="1" type="primary">eif2b</name>
    <name type="ordered locus">STK_05160</name>
</gene>
<evidence type="ECO:0000255" key="1">
    <source>
        <dbReference type="HAMAP-Rule" id="MF_00232"/>
    </source>
</evidence>
<dbReference type="EMBL" id="BA000023">
    <property type="protein sequence ID" value="BAK54316.1"/>
    <property type="molecule type" value="Genomic_DNA"/>
</dbReference>
<dbReference type="SMR" id="Q974Z6"/>
<dbReference type="STRING" id="273063.STK_05160"/>
<dbReference type="KEGG" id="sto:STK_05160"/>
<dbReference type="PATRIC" id="fig|273063.9.peg.594"/>
<dbReference type="eggNOG" id="arCOG01640">
    <property type="taxonomic scope" value="Archaea"/>
</dbReference>
<dbReference type="Proteomes" id="UP000001015">
    <property type="component" value="Chromosome"/>
</dbReference>
<dbReference type="GO" id="GO:0003743">
    <property type="term" value="F:translation initiation factor activity"/>
    <property type="evidence" value="ECO:0007669"/>
    <property type="project" value="UniProtKB-UniRule"/>
</dbReference>
<dbReference type="FunFam" id="3.30.30.170:FF:000001">
    <property type="entry name" value="Eukaryotic translation initiation factor 2 subunit"/>
    <property type="match status" value="1"/>
</dbReference>
<dbReference type="Gene3D" id="3.30.30.170">
    <property type="match status" value="1"/>
</dbReference>
<dbReference type="HAMAP" id="MF_00232">
    <property type="entry name" value="eIF_2_beta"/>
    <property type="match status" value="1"/>
</dbReference>
<dbReference type="InterPro" id="IPR045196">
    <property type="entry name" value="IF2/IF5"/>
</dbReference>
<dbReference type="InterPro" id="IPR004458">
    <property type="entry name" value="TIF2_bsu_arc"/>
</dbReference>
<dbReference type="InterPro" id="IPR002735">
    <property type="entry name" value="Transl_init_fac_IF2/IF5_dom"/>
</dbReference>
<dbReference type="InterPro" id="IPR016189">
    <property type="entry name" value="Transl_init_fac_IF2/IF5_N"/>
</dbReference>
<dbReference type="InterPro" id="IPR016190">
    <property type="entry name" value="Transl_init_fac_IF2/IF5_Zn-bd"/>
</dbReference>
<dbReference type="NCBIfam" id="NF003067">
    <property type="entry name" value="PRK03988.1"/>
    <property type="match status" value="1"/>
</dbReference>
<dbReference type="PANTHER" id="PTHR23001">
    <property type="entry name" value="EUKARYOTIC TRANSLATION INITIATION FACTOR"/>
    <property type="match status" value="1"/>
</dbReference>
<dbReference type="PANTHER" id="PTHR23001:SF3">
    <property type="entry name" value="EUKARYOTIC TRANSLATION INITIATION FACTOR 2 SUBUNIT 2"/>
    <property type="match status" value="1"/>
</dbReference>
<dbReference type="Pfam" id="PF01873">
    <property type="entry name" value="eIF-5_eIF-2B"/>
    <property type="match status" value="1"/>
</dbReference>
<dbReference type="SMART" id="SM00653">
    <property type="entry name" value="eIF2B_5"/>
    <property type="match status" value="1"/>
</dbReference>
<dbReference type="SUPFAM" id="SSF100966">
    <property type="entry name" value="Translation initiation factor 2 beta, aIF2beta, N-terminal domain"/>
    <property type="match status" value="1"/>
</dbReference>
<dbReference type="SUPFAM" id="SSF75689">
    <property type="entry name" value="Zinc-binding domain of translation initiation factor 2 beta"/>
    <property type="match status" value="1"/>
</dbReference>
<accession>Q974Z6</accession>
<accession>F9VN19</accession>
<reference key="1">
    <citation type="journal article" date="2001" name="DNA Res.">
        <title>Complete genome sequence of an aerobic thermoacidophilic Crenarchaeon, Sulfolobus tokodaii strain7.</title>
        <authorList>
            <person name="Kawarabayasi Y."/>
            <person name="Hino Y."/>
            <person name="Horikawa H."/>
            <person name="Jin-no K."/>
            <person name="Takahashi M."/>
            <person name="Sekine M."/>
            <person name="Baba S."/>
            <person name="Ankai A."/>
            <person name="Kosugi H."/>
            <person name="Hosoyama A."/>
            <person name="Fukui S."/>
            <person name="Nagai Y."/>
            <person name="Nishijima K."/>
            <person name="Otsuka R."/>
            <person name="Nakazawa H."/>
            <person name="Takamiya M."/>
            <person name="Kato Y."/>
            <person name="Yoshizawa T."/>
            <person name="Tanaka T."/>
            <person name="Kudoh Y."/>
            <person name="Yamazaki J."/>
            <person name="Kushida N."/>
            <person name="Oguchi A."/>
            <person name="Aoki K."/>
            <person name="Masuda S."/>
            <person name="Yanagii M."/>
            <person name="Nishimura M."/>
            <person name="Yamagishi A."/>
            <person name="Oshima T."/>
            <person name="Kikuchi H."/>
        </authorList>
    </citation>
    <scope>NUCLEOTIDE SEQUENCE [LARGE SCALE GENOMIC DNA]</scope>
    <source>
        <strain>DSM 16993 / JCM 10545 / NBRC 100140 / 7</strain>
    </source>
</reference>